<evidence type="ECO:0000255" key="1">
    <source>
        <dbReference type="HAMAP-Rule" id="MF_00104"/>
    </source>
</evidence>
<keyword id="KW-0963">Cytoplasm</keyword>
<keyword id="KW-0255">Endonuclease</keyword>
<keyword id="KW-0378">Hydrolase</keyword>
<keyword id="KW-0460">Magnesium</keyword>
<keyword id="KW-0479">Metal-binding</keyword>
<keyword id="KW-0507">mRNA processing</keyword>
<keyword id="KW-0540">Nuclease</keyword>
<keyword id="KW-0694">RNA-binding</keyword>
<keyword id="KW-0698">rRNA processing</keyword>
<keyword id="KW-0699">rRNA-binding</keyword>
<keyword id="KW-0819">tRNA processing</keyword>
<dbReference type="EC" id="3.1.26.3" evidence="1"/>
<dbReference type="EMBL" id="AM933173">
    <property type="protein sequence ID" value="CAR38435.1"/>
    <property type="molecule type" value="Genomic_DNA"/>
</dbReference>
<dbReference type="RefSeq" id="WP_001068341.1">
    <property type="nucleotide sequence ID" value="NC_011274.1"/>
</dbReference>
<dbReference type="SMR" id="B5RD49"/>
<dbReference type="GeneID" id="66757008"/>
<dbReference type="KEGG" id="seg:SG2618"/>
<dbReference type="HOGENOM" id="CLU_000907_1_1_6"/>
<dbReference type="Proteomes" id="UP000008321">
    <property type="component" value="Chromosome"/>
</dbReference>
<dbReference type="GO" id="GO:0005737">
    <property type="term" value="C:cytoplasm"/>
    <property type="evidence" value="ECO:0007669"/>
    <property type="project" value="UniProtKB-SubCell"/>
</dbReference>
<dbReference type="GO" id="GO:0003725">
    <property type="term" value="F:double-stranded RNA binding"/>
    <property type="evidence" value="ECO:0007669"/>
    <property type="project" value="TreeGrafter"/>
</dbReference>
<dbReference type="GO" id="GO:0046872">
    <property type="term" value="F:metal ion binding"/>
    <property type="evidence" value="ECO:0007669"/>
    <property type="project" value="UniProtKB-KW"/>
</dbReference>
<dbReference type="GO" id="GO:0004525">
    <property type="term" value="F:ribonuclease III activity"/>
    <property type="evidence" value="ECO:0007669"/>
    <property type="project" value="UniProtKB-UniRule"/>
</dbReference>
<dbReference type="GO" id="GO:0019843">
    <property type="term" value="F:rRNA binding"/>
    <property type="evidence" value="ECO:0007669"/>
    <property type="project" value="UniProtKB-KW"/>
</dbReference>
<dbReference type="GO" id="GO:0006397">
    <property type="term" value="P:mRNA processing"/>
    <property type="evidence" value="ECO:0007669"/>
    <property type="project" value="UniProtKB-UniRule"/>
</dbReference>
<dbReference type="GO" id="GO:0010468">
    <property type="term" value="P:regulation of gene expression"/>
    <property type="evidence" value="ECO:0007669"/>
    <property type="project" value="TreeGrafter"/>
</dbReference>
<dbReference type="GO" id="GO:0006364">
    <property type="term" value="P:rRNA processing"/>
    <property type="evidence" value="ECO:0007669"/>
    <property type="project" value="UniProtKB-UniRule"/>
</dbReference>
<dbReference type="GO" id="GO:0008033">
    <property type="term" value="P:tRNA processing"/>
    <property type="evidence" value="ECO:0007669"/>
    <property type="project" value="UniProtKB-KW"/>
</dbReference>
<dbReference type="CDD" id="cd10845">
    <property type="entry name" value="DSRM_RNAse_III_family"/>
    <property type="match status" value="1"/>
</dbReference>
<dbReference type="CDD" id="cd00593">
    <property type="entry name" value="RIBOc"/>
    <property type="match status" value="1"/>
</dbReference>
<dbReference type="FunFam" id="1.10.1520.10:FF:000001">
    <property type="entry name" value="Ribonuclease 3"/>
    <property type="match status" value="1"/>
</dbReference>
<dbReference type="FunFam" id="3.30.160.20:FF:000003">
    <property type="entry name" value="Ribonuclease 3"/>
    <property type="match status" value="1"/>
</dbReference>
<dbReference type="Gene3D" id="3.30.160.20">
    <property type="match status" value="1"/>
</dbReference>
<dbReference type="Gene3D" id="1.10.1520.10">
    <property type="entry name" value="Ribonuclease III domain"/>
    <property type="match status" value="1"/>
</dbReference>
<dbReference type="HAMAP" id="MF_00104">
    <property type="entry name" value="RNase_III"/>
    <property type="match status" value="1"/>
</dbReference>
<dbReference type="InterPro" id="IPR014720">
    <property type="entry name" value="dsRBD_dom"/>
</dbReference>
<dbReference type="InterPro" id="IPR011907">
    <property type="entry name" value="RNase_III"/>
</dbReference>
<dbReference type="InterPro" id="IPR000999">
    <property type="entry name" value="RNase_III_dom"/>
</dbReference>
<dbReference type="InterPro" id="IPR036389">
    <property type="entry name" value="RNase_III_sf"/>
</dbReference>
<dbReference type="NCBIfam" id="TIGR02191">
    <property type="entry name" value="RNaseIII"/>
    <property type="match status" value="1"/>
</dbReference>
<dbReference type="PANTHER" id="PTHR11207:SF0">
    <property type="entry name" value="RIBONUCLEASE 3"/>
    <property type="match status" value="1"/>
</dbReference>
<dbReference type="PANTHER" id="PTHR11207">
    <property type="entry name" value="RIBONUCLEASE III"/>
    <property type="match status" value="1"/>
</dbReference>
<dbReference type="Pfam" id="PF00035">
    <property type="entry name" value="dsrm"/>
    <property type="match status" value="1"/>
</dbReference>
<dbReference type="Pfam" id="PF14622">
    <property type="entry name" value="Ribonucleas_3_3"/>
    <property type="match status" value="1"/>
</dbReference>
<dbReference type="SMART" id="SM00358">
    <property type="entry name" value="DSRM"/>
    <property type="match status" value="1"/>
</dbReference>
<dbReference type="SMART" id="SM00535">
    <property type="entry name" value="RIBOc"/>
    <property type="match status" value="1"/>
</dbReference>
<dbReference type="SUPFAM" id="SSF54768">
    <property type="entry name" value="dsRNA-binding domain-like"/>
    <property type="match status" value="1"/>
</dbReference>
<dbReference type="SUPFAM" id="SSF69065">
    <property type="entry name" value="RNase III domain-like"/>
    <property type="match status" value="1"/>
</dbReference>
<dbReference type="PROSITE" id="PS50137">
    <property type="entry name" value="DS_RBD"/>
    <property type="match status" value="1"/>
</dbReference>
<dbReference type="PROSITE" id="PS00517">
    <property type="entry name" value="RNASE_3_1"/>
    <property type="match status" value="1"/>
</dbReference>
<dbReference type="PROSITE" id="PS50142">
    <property type="entry name" value="RNASE_3_2"/>
    <property type="match status" value="1"/>
</dbReference>
<accession>B5RD49</accession>
<comment type="function">
    <text evidence="1">Digests double-stranded RNA. Involved in the processing of primary rRNA transcript to yield the immediate precursors to the large and small rRNAs (23S and 16S). Processes some mRNAs, and tRNAs when they are encoded in the rRNA operon. Processes pre-crRNA and tracrRNA of type II CRISPR loci if present in the organism.</text>
</comment>
<comment type="catalytic activity">
    <reaction evidence="1">
        <text>Endonucleolytic cleavage to 5'-phosphomonoester.</text>
        <dbReference type="EC" id="3.1.26.3"/>
    </reaction>
</comment>
<comment type="cofactor">
    <cofactor evidence="1">
        <name>Mg(2+)</name>
        <dbReference type="ChEBI" id="CHEBI:18420"/>
    </cofactor>
</comment>
<comment type="subunit">
    <text evidence="1">Homodimer.</text>
</comment>
<comment type="subcellular location">
    <subcellularLocation>
        <location evidence="1">Cytoplasm</location>
    </subcellularLocation>
</comment>
<comment type="similarity">
    <text evidence="1">Belongs to the ribonuclease III family.</text>
</comment>
<organism>
    <name type="scientific">Salmonella gallinarum (strain 287/91 / NCTC 13346)</name>
    <dbReference type="NCBI Taxonomy" id="550538"/>
    <lineage>
        <taxon>Bacteria</taxon>
        <taxon>Pseudomonadati</taxon>
        <taxon>Pseudomonadota</taxon>
        <taxon>Gammaproteobacteria</taxon>
        <taxon>Enterobacterales</taxon>
        <taxon>Enterobacteriaceae</taxon>
        <taxon>Salmonella</taxon>
    </lineage>
</organism>
<sequence length="226" mass="25505">MNPIVINRLQRKLGYTFNHQELLQQALTHRSASSKHNERLEFLGDSILSFVIANALYHRFPRVDEGDMSRMRATLVRGNTLAELAREFDLGECLRLGPGELKSGGFRRESILADTVEALIGGVFLDSNIQTVEQLILNWYKTRLDEISPGDKQKDPKTRLQEYLQGRHLPLPSYLVVQVRGEAHDQEFTIHCQVSGLSEPVVGTGSSRRKAEQAAAEQALKKLELE</sequence>
<name>RNC_SALG2</name>
<reference key="1">
    <citation type="journal article" date="2008" name="Genome Res.">
        <title>Comparative genome analysis of Salmonella enteritidis PT4 and Salmonella gallinarum 287/91 provides insights into evolutionary and host adaptation pathways.</title>
        <authorList>
            <person name="Thomson N.R."/>
            <person name="Clayton D.J."/>
            <person name="Windhorst D."/>
            <person name="Vernikos G."/>
            <person name="Davidson S."/>
            <person name="Churcher C."/>
            <person name="Quail M.A."/>
            <person name="Stevens M."/>
            <person name="Jones M.A."/>
            <person name="Watson M."/>
            <person name="Barron A."/>
            <person name="Layton A."/>
            <person name="Pickard D."/>
            <person name="Kingsley R.A."/>
            <person name="Bignell A."/>
            <person name="Clark L."/>
            <person name="Harris B."/>
            <person name="Ormond D."/>
            <person name="Abdellah Z."/>
            <person name="Brooks K."/>
            <person name="Cherevach I."/>
            <person name="Chillingworth T."/>
            <person name="Woodward J."/>
            <person name="Norberczak H."/>
            <person name="Lord A."/>
            <person name="Arrowsmith C."/>
            <person name="Jagels K."/>
            <person name="Moule S."/>
            <person name="Mungall K."/>
            <person name="Saunders M."/>
            <person name="Whitehead S."/>
            <person name="Chabalgoity J.A."/>
            <person name="Maskell D."/>
            <person name="Humphreys T."/>
            <person name="Roberts M."/>
            <person name="Barrow P.A."/>
            <person name="Dougan G."/>
            <person name="Parkhill J."/>
        </authorList>
    </citation>
    <scope>NUCLEOTIDE SEQUENCE [LARGE SCALE GENOMIC DNA]</scope>
    <source>
        <strain>287/91 / NCTC 13346</strain>
    </source>
</reference>
<feature type="chain" id="PRO_1000094130" description="Ribonuclease 3">
    <location>
        <begin position="1"/>
        <end position="226"/>
    </location>
</feature>
<feature type="domain" description="RNase III" evidence="1">
    <location>
        <begin position="6"/>
        <end position="128"/>
    </location>
</feature>
<feature type="domain" description="DRBM" evidence="1">
    <location>
        <begin position="155"/>
        <end position="225"/>
    </location>
</feature>
<feature type="active site" evidence="1">
    <location>
        <position position="45"/>
    </location>
</feature>
<feature type="active site" evidence="1">
    <location>
        <position position="117"/>
    </location>
</feature>
<feature type="binding site" evidence="1">
    <location>
        <position position="41"/>
    </location>
    <ligand>
        <name>Mg(2+)</name>
        <dbReference type="ChEBI" id="CHEBI:18420"/>
    </ligand>
</feature>
<feature type="binding site" evidence="1">
    <location>
        <position position="114"/>
    </location>
    <ligand>
        <name>Mg(2+)</name>
        <dbReference type="ChEBI" id="CHEBI:18420"/>
    </ligand>
</feature>
<feature type="binding site" evidence="1">
    <location>
        <position position="117"/>
    </location>
    <ligand>
        <name>Mg(2+)</name>
        <dbReference type="ChEBI" id="CHEBI:18420"/>
    </ligand>
</feature>
<gene>
    <name evidence="1" type="primary">rnc</name>
    <name type="ordered locus">SG2618</name>
</gene>
<protein>
    <recommendedName>
        <fullName evidence="1">Ribonuclease 3</fullName>
        <ecNumber evidence="1">3.1.26.3</ecNumber>
    </recommendedName>
    <alternativeName>
        <fullName evidence="1">Ribonuclease III</fullName>
        <shortName evidence="1">RNase III</shortName>
    </alternativeName>
</protein>
<proteinExistence type="inferred from homology"/>